<name>ZAPD_SHEB2</name>
<sequence length="244" mass="28812">MTELVYEQPLNEKIRSYLRLEYLDKQLQSNLNHDHQHRCFYPLFSLCELSERCDYRNEVLKDIERHLLQLSKWQELDHVDHQQIDLYINALTQAREPLQKPDRFGSQLKQDRFISALRQRFGMPGACCNFDLPQLHYWLAKPWEEKQQDYRSWIAHFEPLLTPITLLLQLTRSTAHYDNAVAHAGFYQGDSAQALALVRVKVDASHGCYPTISGHKNRFAIHFVQFEQQRHSDRSIDFLLATCA</sequence>
<keyword id="KW-0131">Cell cycle</keyword>
<keyword id="KW-0132">Cell division</keyword>
<keyword id="KW-0963">Cytoplasm</keyword>
<keyword id="KW-0717">Septation</keyword>
<comment type="function">
    <text evidence="1">Cell division factor that enhances FtsZ-ring assembly. Directly interacts with FtsZ and promotes bundling of FtsZ protofilaments, with a reduction in FtsZ GTPase activity.</text>
</comment>
<comment type="subunit">
    <text evidence="1">Interacts with FtsZ.</text>
</comment>
<comment type="subcellular location">
    <subcellularLocation>
        <location evidence="1">Cytoplasm</location>
    </subcellularLocation>
    <text evidence="1">Localizes to mid-cell in an FtsZ-dependent manner.</text>
</comment>
<comment type="similarity">
    <text evidence="1">Belongs to the ZapD family.</text>
</comment>
<evidence type="ECO:0000255" key="1">
    <source>
        <dbReference type="HAMAP-Rule" id="MF_01092"/>
    </source>
</evidence>
<organism>
    <name type="scientific">Shewanella baltica (strain OS223)</name>
    <dbReference type="NCBI Taxonomy" id="407976"/>
    <lineage>
        <taxon>Bacteria</taxon>
        <taxon>Pseudomonadati</taxon>
        <taxon>Pseudomonadota</taxon>
        <taxon>Gammaproteobacteria</taxon>
        <taxon>Alteromonadales</taxon>
        <taxon>Shewanellaceae</taxon>
        <taxon>Shewanella</taxon>
    </lineage>
</organism>
<proteinExistence type="inferred from homology"/>
<accession>B8E665</accession>
<dbReference type="EMBL" id="CP001252">
    <property type="protein sequence ID" value="ACK48346.1"/>
    <property type="molecule type" value="Genomic_DNA"/>
</dbReference>
<dbReference type="RefSeq" id="WP_012588716.1">
    <property type="nucleotide sequence ID" value="NC_011663.1"/>
</dbReference>
<dbReference type="SMR" id="B8E665"/>
<dbReference type="KEGG" id="sbp:Sbal223_3871"/>
<dbReference type="HOGENOM" id="CLU_076303_0_0_6"/>
<dbReference type="Proteomes" id="UP000002507">
    <property type="component" value="Chromosome"/>
</dbReference>
<dbReference type="GO" id="GO:0032153">
    <property type="term" value="C:cell division site"/>
    <property type="evidence" value="ECO:0007669"/>
    <property type="project" value="TreeGrafter"/>
</dbReference>
<dbReference type="GO" id="GO:0005737">
    <property type="term" value="C:cytoplasm"/>
    <property type="evidence" value="ECO:0007669"/>
    <property type="project" value="UniProtKB-SubCell"/>
</dbReference>
<dbReference type="GO" id="GO:0000917">
    <property type="term" value="P:division septum assembly"/>
    <property type="evidence" value="ECO:0007669"/>
    <property type="project" value="UniProtKB-KW"/>
</dbReference>
<dbReference type="GO" id="GO:0043093">
    <property type="term" value="P:FtsZ-dependent cytokinesis"/>
    <property type="evidence" value="ECO:0007669"/>
    <property type="project" value="UniProtKB-UniRule"/>
</dbReference>
<dbReference type="Gene3D" id="1.10.3900.10">
    <property type="entry name" value="YacF-like"/>
    <property type="match status" value="1"/>
</dbReference>
<dbReference type="Gene3D" id="2.60.440.10">
    <property type="entry name" value="YacF-like domains"/>
    <property type="match status" value="1"/>
</dbReference>
<dbReference type="HAMAP" id="MF_01092">
    <property type="entry name" value="ZapD"/>
    <property type="match status" value="1"/>
</dbReference>
<dbReference type="InterPro" id="IPR009777">
    <property type="entry name" value="ZapD"/>
</dbReference>
<dbReference type="InterPro" id="IPR027462">
    <property type="entry name" value="ZapD_C"/>
</dbReference>
<dbReference type="InterPro" id="IPR036268">
    <property type="entry name" value="ZapD_sf"/>
</dbReference>
<dbReference type="NCBIfam" id="NF003654">
    <property type="entry name" value="PRK05287.1-2"/>
    <property type="match status" value="1"/>
</dbReference>
<dbReference type="NCBIfam" id="NF003655">
    <property type="entry name" value="PRK05287.1-3"/>
    <property type="match status" value="1"/>
</dbReference>
<dbReference type="PANTHER" id="PTHR39455">
    <property type="entry name" value="CELL DIVISION PROTEIN ZAPD"/>
    <property type="match status" value="1"/>
</dbReference>
<dbReference type="PANTHER" id="PTHR39455:SF1">
    <property type="entry name" value="CELL DIVISION PROTEIN ZAPD"/>
    <property type="match status" value="1"/>
</dbReference>
<dbReference type="Pfam" id="PF07072">
    <property type="entry name" value="ZapD"/>
    <property type="match status" value="1"/>
</dbReference>
<dbReference type="SUPFAM" id="SSF160950">
    <property type="entry name" value="YacF-like"/>
    <property type="match status" value="1"/>
</dbReference>
<gene>
    <name evidence="1" type="primary">zapD</name>
    <name type="ordered locus">Sbal223_3871</name>
</gene>
<protein>
    <recommendedName>
        <fullName evidence="1">Cell division protein ZapD</fullName>
    </recommendedName>
    <alternativeName>
        <fullName evidence="1">Z ring-associated protein D</fullName>
    </alternativeName>
</protein>
<reference key="1">
    <citation type="submission" date="2008-12" db="EMBL/GenBank/DDBJ databases">
        <title>Complete sequence of chromosome of Shewanella baltica OS223.</title>
        <authorList>
            <consortium name="US DOE Joint Genome Institute"/>
            <person name="Lucas S."/>
            <person name="Copeland A."/>
            <person name="Lapidus A."/>
            <person name="Glavina del Rio T."/>
            <person name="Dalin E."/>
            <person name="Tice H."/>
            <person name="Bruce D."/>
            <person name="Goodwin L."/>
            <person name="Pitluck S."/>
            <person name="Chertkov O."/>
            <person name="Meincke L."/>
            <person name="Brettin T."/>
            <person name="Detter J.C."/>
            <person name="Han C."/>
            <person name="Kuske C.R."/>
            <person name="Larimer F."/>
            <person name="Land M."/>
            <person name="Hauser L."/>
            <person name="Kyrpides N."/>
            <person name="Ovchinnikova G."/>
            <person name="Brettar I."/>
            <person name="Rodrigues J."/>
            <person name="Konstantinidis K."/>
            <person name="Tiedje J."/>
        </authorList>
    </citation>
    <scope>NUCLEOTIDE SEQUENCE [LARGE SCALE GENOMIC DNA]</scope>
    <source>
        <strain>OS223</strain>
    </source>
</reference>
<feature type="chain" id="PRO_1000149891" description="Cell division protein ZapD">
    <location>
        <begin position="1"/>
        <end position="244"/>
    </location>
</feature>